<accession>P86150</accession>
<evidence type="ECO:0000250" key="1">
    <source>
        <dbReference type="UniProtKB" id="P32412"/>
    </source>
</evidence>
<evidence type="ECO:0000255" key="2"/>
<evidence type="ECO:0000269" key="3">
    <source>
    </source>
</evidence>
<evidence type="ECO:0000303" key="4">
    <source>
    </source>
</evidence>
<evidence type="ECO:0000305" key="5"/>
<reference evidence="5" key="1">
    <citation type="journal article" date="2008" name="Rapid Commun. Mass Spectrom.">
        <title>De novo sequencing of peptides secreted by the skin glands of the caucasian green frog Rana ridibunda.</title>
        <authorList>
            <person name="Samgina T.Y."/>
            <person name="Artemenko K.A."/>
            <person name="Gorshkov V.A."/>
            <person name="Ogourtsov S.V."/>
            <person name="Zubarev R.A."/>
            <person name="Lebedev A.T."/>
        </authorList>
    </citation>
    <scope>PROTEIN SEQUENCE</scope>
    <scope>MASS SPECTROMETRY</scope>
    <scope>DISULFIDE BOND</scope>
    <source>
        <tissue evidence="3">Skin secretion</tissue>
    </source>
</reference>
<organism>
    <name type="scientific">Pelophylax ridibundus</name>
    <name type="common">Marsh frog</name>
    <name type="synonym">Rana ridibunda</name>
    <dbReference type="NCBI Taxonomy" id="8406"/>
    <lineage>
        <taxon>Eukaryota</taxon>
        <taxon>Metazoa</taxon>
        <taxon>Chordata</taxon>
        <taxon>Craniata</taxon>
        <taxon>Vertebrata</taxon>
        <taxon>Euteleostomi</taxon>
        <taxon>Amphibia</taxon>
        <taxon>Batrachia</taxon>
        <taxon>Anura</taxon>
        <taxon>Neobatrachia</taxon>
        <taxon>Ranoidea</taxon>
        <taxon>Ranidae</taxon>
        <taxon>Pelophylax</taxon>
    </lineage>
</organism>
<comment type="function">
    <text evidence="1">Shows antibacterial activity against representative Gram-negative and Gram-positive bacterial species, and hemolytic activity.</text>
</comment>
<comment type="subcellular location">
    <subcellularLocation>
        <location evidence="5">Secreted</location>
    </subcellularLocation>
</comment>
<comment type="tissue specificity">
    <text evidence="5">Expressed by the skin glands.</text>
</comment>
<comment type="mass spectrometry" mass="2707.0" method="Electrospray" evidence="3"/>
<comment type="similarity">
    <text evidence="2">Belongs to the frog skin active peptide (FSAP) family. Brevinin subfamily.</text>
</comment>
<feature type="peptide" id="PRO_0000361058" description="Brevinin-1Ecb" evidence="3">
    <location>
        <begin position="1"/>
        <end position="24"/>
    </location>
</feature>
<feature type="disulfide bond" evidence="3">
    <location>
        <begin position="18"/>
        <end position="24"/>
    </location>
</feature>
<protein>
    <recommendedName>
        <fullName evidence="4">Brevinin-1Ecb</fullName>
    </recommendedName>
</protein>
<name>BR1EC_PELRI</name>
<keyword id="KW-0878">Amphibian defense peptide</keyword>
<keyword id="KW-0044">Antibiotic</keyword>
<keyword id="KW-0929">Antimicrobial</keyword>
<keyword id="KW-0204">Cytolysis</keyword>
<keyword id="KW-0903">Direct protein sequencing</keyword>
<keyword id="KW-1015">Disulfide bond</keyword>
<keyword id="KW-0354">Hemolysis</keyword>
<keyword id="KW-0964">Secreted</keyword>
<sequence length="24" mass="2712">FLPLLAGLAANFFPKIFCKITRKC</sequence>
<proteinExistence type="evidence at protein level"/>
<dbReference type="GO" id="GO:0005576">
    <property type="term" value="C:extracellular region"/>
    <property type="evidence" value="ECO:0000314"/>
    <property type="project" value="UniProtKB"/>
</dbReference>
<dbReference type="GO" id="GO:0042742">
    <property type="term" value="P:defense response to bacterium"/>
    <property type="evidence" value="ECO:0007669"/>
    <property type="project" value="UniProtKB-KW"/>
</dbReference>
<dbReference type="GO" id="GO:0031640">
    <property type="term" value="P:killing of cells of another organism"/>
    <property type="evidence" value="ECO:0007669"/>
    <property type="project" value="UniProtKB-KW"/>
</dbReference>
<dbReference type="InterPro" id="IPR012520">
    <property type="entry name" value="Antimicrobial_frog_1"/>
</dbReference>
<dbReference type="Pfam" id="PF08018">
    <property type="entry name" value="Antimicrobial_1"/>
    <property type="match status" value="1"/>
</dbReference>